<proteinExistence type="inferred from homology"/>
<evidence type="ECO:0000255" key="1">
    <source>
        <dbReference type="HAMAP-Rule" id="MF_01705"/>
    </source>
</evidence>
<evidence type="ECO:0000255" key="2">
    <source>
        <dbReference type="PROSITE-ProRule" id="PRU01213"/>
    </source>
</evidence>
<sequence length="352" mass="39086">MLELNFSQTLGNHCLTINETLPANGITAIFGVSGAGKTSLINAISGLTRPQKGRIVLNGRVLNDAEKGICLTPEKRRVGYVFQDARLFPHYKVRGNLRYGMAKSMVDQFDKLVALLGIEPLLDRLPGSLSGGEKQRVAIGRALLTAPELLLLDEPLASLDIPRKRELLPYLQRLTREINIPMLYVSHSLDEILHLADRVMVLENGQVKAFGALEEVWGSSVMNPWLPKEQQSSILKVTVLEHHPHYAMTALALGDQHLWVNKLDEPLQAALRIRIQASDVSLVLQPPQQTSIRNVLRAKVVNSYDDNGQVEVELEVGGKTLWARISPWARDELAIKPGLWLYAQIKSVSITA</sequence>
<organism>
    <name type="scientific">Shigella boydii serotype 4 (strain Sb227)</name>
    <dbReference type="NCBI Taxonomy" id="300268"/>
    <lineage>
        <taxon>Bacteria</taxon>
        <taxon>Pseudomonadati</taxon>
        <taxon>Pseudomonadota</taxon>
        <taxon>Gammaproteobacteria</taxon>
        <taxon>Enterobacterales</taxon>
        <taxon>Enterobacteriaceae</taxon>
        <taxon>Shigella</taxon>
    </lineage>
</organism>
<name>MODC_SHIBS</name>
<accession>Q324F4</accession>
<protein>
    <recommendedName>
        <fullName evidence="1">Molybdenum import ATP-binding protein ModC</fullName>
        <ecNumber evidence="1">7.3.2.5</ecNumber>
    </recommendedName>
</protein>
<reference key="1">
    <citation type="journal article" date="2005" name="Nucleic Acids Res.">
        <title>Genome dynamics and diversity of Shigella species, the etiologic agents of bacillary dysentery.</title>
        <authorList>
            <person name="Yang F."/>
            <person name="Yang J."/>
            <person name="Zhang X."/>
            <person name="Chen L."/>
            <person name="Jiang Y."/>
            <person name="Yan Y."/>
            <person name="Tang X."/>
            <person name="Wang J."/>
            <person name="Xiong Z."/>
            <person name="Dong J."/>
            <person name="Xue Y."/>
            <person name="Zhu Y."/>
            <person name="Xu X."/>
            <person name="Sun L."/>
            <person name="Chen S."/>
            <person name="Nie H."/>
            <person name="Peng J."/>
            <person name="Xu J."/>
            <person name="Wang Y."/>
            <person name="Yuan Z."/>
            <person name="Wen Y."/>
            <person name="Yao Z."/>
            <person name="Shen Y."/>
            <person name="Qiang B."/>
            <person name="Hou Y."/>
            <person name="Yu J."/>
            <person name="Jin Q."/>
        </authorList>
    </citation>
    <scope>NUCLEOTIDE SEQUENCE [LARGE SCALE GENOMIC DNA]</scope>
    <source>
        <strain>Sb227</strain>
    </source>
</reference>
<comment type="function">
    <text evidence="1">Part of the ABC transporter complex ModABC involved in molybdenum import. Responsible for energy coupling to the transport system.</text>
</comment>
<comment type="catalytic activity">
    <reaction evidence="1">
        <text>molybdate(out) + ATP + H2O = molybdate(in) + ADP + phosphate + H(+)</text>
        <dbReference type="Rhea" id="RHEA:22020"/>
        <dbReference type="ChEBI" id="CHEBI:15377"/>
        <dbReference type="ChEBI" id="CHEBI:15378"/>
        <dbReference type="ChEBI" id="CHEBI:30616"/>
        <dbReference type="ChEBI" id="CHEBI:36264"/>
        <dbReference type="ChEBI" id="CHEBI:43474"/>
        <dbReference type="ChEBI" id="CHEBI:456216"/>
        <dbReference type="EC" id="7.3.2.5"/>
    </reaction>
</comment>
<comment type="subunit">
    <text evidence="1">The complex is composed of two ATP-binding proteins (ModC), two transmembrane proteins (ModB) and a solute-binding protein (ModA).</text>
</comment>
<comment type="subcellular location">
    <subcellularLocation>
        <location evidence="1">Cell inner membrane</location>
        <topology evidence="1">Peripheral membrane protein</topology>
    </subcellularLocation>
</comment>
<comment type="similarity">
    <text evidence="1">Belongs to the ABC transporter superfamily. Molybdate importer (TC 3.A.1.8) family.</text>
</comment>
<gene>
    <name evidence="1" type="primary">modC</name>
    <name type="ordered locus">SBO_0620</name>
</gene>
<keyword id="KW-0067">ATP-binding</keyword>
<keyword id="KW-0997">Cell inner membrane</keyword>
<keyword id="KW-1003">Cell membrane</keyword>
<keyword id="KW-0472">Membrane</keyword>
<keyword id="KW-0500">Molybdenum</keyword>
<keyword id="KW-0547">Nucleotide-binding</keyword>
<keyword id="KW-1278">Translocase</keyword>
<keyword id="KW-0813">Transport</keyword>
<dbReference type="EC" id="7.3.2.5" evidence="1"/>
<dbReference type="EMBL" id="CP000036">
    <property type="protein sequence ID" value="ABB65304.1"/>
    <property type="molecule type" value="Genomic_DNA"/>
</dbReference>
<dbReference type="RefSeq" id="WP_000891683.1">
    <property type="nucleotide sequence ID" value="NC_007613.1"/>
</dbReference>
<dbReference type="SMR" id="Q324F4"/>
<dbReference type="KEGG" id="sbo:SBO_0620"/>
<dbReference type="HOGENOM" id="CLU_000604_1_1_6"/>
<dbReference type="Proteomes" id="UP000007067">
    <property type="component" value="Chromosome"/>
</dbReference>
<dbReference type="GO" id="GO:0005886">
    <property type="term" value="C:plasma membrane"/>
    <property type="evidence" value="ECO:0007669"/>
    <property type="project" value="UniProtKB-SubCell"/>
</dbReference>
<dbReference type="GO" id="GO:0015412">
    <property type="term" value="F:ABC-type molybdate transporter activity"/>
    <property type="evidence" value="ECO:0007669"/>
    <property type="project" value="UniProtKB-EC"/>
</dbReference>
<dbReference type="GO" id="GO:0005524">
    <property type="term" value="F:ATP binding"/>
    <property type="evidence" value="ECO:0007669"/>
    <property type="project" value="UniProtKB-KW"/>
</dbReference>
<dbReference type="GO" id="GO:0016887">
    <property type="term" value="F:ATP hydrolysis activity"/>
    <property type="evidence" value="ECO:0007669"/>
    <property type="project" value="InterPro"/>
</dbReference>
<dbReference type="FunFam" id="2.40.50.100:FF:000037">
    <property type="entry name" value="Molybdenum import ATP-binding protein ModC"/>
    <property type="match status" value="1"/>
</dbReference>
<dbReference type="FunFam" id="3.40.50.300:FF:000634">
    <property type="entry name" value="Molybdenum import ATP-binding protein ModC"/>
    <property type="match status" value="1"/>
</dbReference>
<dbReference type="Gene3D" id="2.40.50.100">
    <property type="match status" value="1"/>
</dbReference>
<dbReference type="Gene3D" id="3.40.50.300">
    <property type="entry name" value="P-loop containing nucleotide triphosphate hydrolases"/>
    <property type="match status" value="1"/>
</dbReference>
<dbReference type="InterPro" id="IPR003593">
    <property type="entry name" value="AAA+_ATPase"/>
</dbReference>
<dbReference type="InterPro" id="IPR003439">
    <property type="entry name" value="ABC_transporter-like_ATP-bd"/>
</dbReference>
<dbReference type="InterPro" id="IPR017871">
    <property type="entry name" value="ABC_transporter-like_CS"/>
</dbReference>
<dbReference type="InterPro" id="IPR008995">
    <property type="entry name" value="Mo/tungstate-bd_C_term_dom"/>
</dbReference>
<dbReference type="InterPro" id="IPR011868">
    <property type="entry name" value="ModC_ABC_ATP-bd"/>
</dbReference>
<dbReference type="InterPro" id="IPR050334">
    <property type="entry name" value="Molybdenum_import_ModC"/>
</dbReference>
<dbReference type="InterPro" id="IPR004606">
    <property type="entry name" value="Mop_domain"/>
</dbReference>
<dbReference type="InterPro" id="IPR027417">
    <property type="entry name" value="P-loop_NTPase"/>
</dbReference>
<dbReference type="InterPro" id="IPR005116">
    <property type="entry name" value="Transp-assoc_OB_typ1"/>
</dbReference>
<dbReference type="NCBIfam" id="TIGR02142">
    <property type="entry name" value="modC_ABC"/>
    <property type="match status" value="1"/>
</dbReference>
<dbReference type="NCBIfam" id="TIGR00638">
    <property type="entry name" value="Mop"/>
    <property type="match status" value="1"/>
</dbReference>
<dbReference type="NCBIfam" id="NF008355">
    <property type="entry name" value="PRK11144.1"/>
    <property type="match status" value="1"/>
</dbReference>
<dbReference type="PANTHER" id="PTHR43514">
    <property type="entry name" value="ABC TRANSPORTER I FAMILY MEMBER 10"/>
    <property type="match status" value="1"/>
</dbReference>
<dbReference type="PANTHER" id="PTHR43514:SF4">
    <property type="entry name" value="ABC TRANSPORTER I FAMILY MEMBER 10"/>
    <property type="match status" value="1"/>
</dbReference>
<dbReference type="Pfam" id="PF00005">
    <property type="entry name" value="ABC_tran"/>
    <property type="match status" value="1"/>
</dbReference>
<dbReference type="Pfam" id="PF03459">
    <property type="entry name" value="TOBE"/>
    <property type="match status" value="1"/>
</dbReference>
<dbReference type="SMART" id="SM00382">
    <property type="entry name" value="AAA"/>
    <property type="match status" value="1"/>
</dbReference>
<dbReference type="SUPFAM" id="SSF50331">
    <property type="entry name" value="MOP-like"/>
    <property type="match status" value="1"/>
</dbReference>
<dbReference type="SUPFAM" id="SSF52540">
    <property type="entry name" value="P-loop containing nucleoside triphosphate hydrolases"/>
    <property type="match status" value="1"/>
</dbReference>
<dbReference type="PROSITE" id="PS00211">
    <property type="entry name" value="ABC_TRANSPORTER_1"/>
    <property type="match status" value="1"/>
</dbReference>
<dbReference type="PROSITE" id="PS50893">
    <property type="entry name" value="ABC_TRANSPORTER_2"/>
    <property type="match status" value="1"/>
</dbReference>
<dbReference type="PROSITE" id="PS51241">
    <property type="entry name" value="MODC"/>
    <property type="match status" value="1"/>
</dbReference>
<dbReference type="PROSITE" id="PS51866">
    <property type="entry name" value="MOP"/>
    <property type="match status" value="1"/>
</dbReference>
<feature type="chain" id="PRO_0000271693" description="Molybdenum import ATP-binding protein ModC">
    <location>
        <begin position="1"/>
        <end position="352"/>
    </location>
</feature>
<feature type="domain" description="ABC transporter" evidence="1">
    <location>
        <begin position="1"/>
        <end position="229"/>
    </location>
</feature>
<feature type="domain" description="Mop" evidence="2">
    <location>
        <begin position="289"/>
        <end position="352"/>
    </location>
</feature>
<feature type="binding site" evidence="1">
    <location>
        <begin position="31"/>
        <end position="38"/>
    </location>
    <ligand>
        <name>ATP</name>
        <dbReference type="ChEBI" id="CHEBI:30616"/>
    </ligand>
</feature>